<evidence type="ECO:0000255" key="1">
    <source>
        <dbReference type="HAMAP-Rule" id="MF_00373"/>
    </source>
</evidence>
<evidence type="ECO:0000256" key="2">
    <source>
        <dbReference type="SAM" id="MobiDB-lite"/>
    </source>
</evidence>
<evidence type="ECO:0000305" key="3"/>
<reference key="1">
    <citation type="submission" date="2009-05" db="EMBL/GenBank/DDBJ databases">
        <title>Complete sequence of Tolumonas auensis DSM 9187.</title>
        <authorList>
            <consortium name="US DOE Joint Genome Institute"/>
            <person name="Lucas S."/>
            <person name="Copeland A."/>
            <person name="Lapidus A."/>
            <person name="Glavina del Rio T."/>
            <person name="Tice H."/>
            <person name="Bruce D."/>
            <person name="Goodwin L."/>
            <person name="Pitluck S."/>
            <person name="Chertkov O."/>
            <person name="Brettin T."/>
            <person name="Detter J.C."/>
            <person name="Han C."/>
            <person name="Larimer F."/>
            <person name="Land M."/>
            <person name="Hauser L."/>
            <person name="Kyrpides N."/>
            <person name="Mikhailova N."/>
            <person name="Spring S."/>
            <person name="Beller H."/>
        </authorList>
    </citation>
    <scope>NUCLEOTIDE SEQUENCE [LARGE SCALE GENOMIC DNA]</scope>
    <source>
        <strain>DSM 9187 / NBRC 110442 / TA 4</strain>
    </source>
</reference>
<gene>
    <name evidence="1" type="primary">rpmB</name>
    <name type="ordered locus">Tola_0182</name>
</gene>
<feature type="chain" id="PRO_1000205613" description="Large ribosomal subunit protein bL28">
    <location>
        <begin position="1"/>
        <end position="78"/>
    </location>
</feature>
<feature type="region of interest" description="Disordered" evidence="2">
    <location>
        <begin position="1"/>
        <end position="25"/>
    </location>
</feature>
<dbReference type="EMBL" id="CP001616">
    <property type="protein sequence ID" value="ACQ91812.1"/>
    <property type="molecule type" value="Genomic_DNA"/>
</dbReference>
<dbReference type="RefSeq" id="WP_012728411.1">
    <property type="nucleotide sequence ID" value="NC_012691.1"/>
</dbReference>
<dbReference type="SMR" id="C4L813"/>
<dbReference type="STRING" id="595494.Tola_0182"/>
<dbReference type="KEGG" id="tau:Tola_0182"/>
<dbReference type="eggNOG" id="COG0227">
    <property type="taxonomic scope" value="Bacteria"/>
</dbReference>
<dbReference type="HOGENOM" id="CLU_064548_3_1_6"/>
<dbReference type="OrthoDB" id="9805609at2"/>
<dbReference type="Proteomes" id="UP000009073">
    <property type="component" value="Chromosome"/>
</dbReference>
<dbReference type="GO" id="GO:0022625">
    <property type="term" value="C:cytosolic large ribosomal subunit"/>
    <property type="evidence" value="ECO:0007669"/>
    <property type="project" value="TreeGrafter"/>
</dbReference>
<dbReference type="GO" id="GO:0003735">
    <property type="term" value="F:structural constituent of ribosome"/>
    <property type="evidence" value="ECO:0007669"/>
    <property type="project" value="InterPro"/>
</dbReference>
<dbReference type="GO" id="GO:0006412">
    <property type="term" value="P:translation"/>
    <property type="evidence" value="ECO:0007669"/>
    <property type="project" value="UniProtKB-UniRule"/>
</dbReference>
<dbReference type="FunFam" id="2.30.170.40:FF:000001">
    <property type="entry name" value="50S ribosomal protein L28"/>
    <property type="match status" value="1"/>
</dbReference>
<dbReference type="Gene3D" id="2.30.170.40">
    <property type="entry name" value="Ribosomal protein L28/L24"/>
    <property type="match status" value="1"/>
</dbReference>
<dbReference type="HAMAP" id="MF_00373">
    <property type="entry name" value="Ribosomal_bL28"/>
    <property type="match status" value="1"/>
</dbReference>
<dbReference type="InterPro" id="IPR026569">
    <property type="entry name" value="Ribosomal_bL28"/>
</dbReference>
<dbReference type="InterPro" id="IPR034704">
    <property type="entry name" value="Ribosomal_bL28/bL31-like_sf"/>
</dbReference>
<dbReference type="InterPro" id="IPR001383">
    <property type="entry name" value="Ribosomal_bL28_bact-type"/>
</dbReference>
<dbReference type="InterPro" id="IPR037147">
    <property type="entry name" value="Ribosomal_bL28_sf"/>
</dbReference>
<dbReference type="NCBIfam" id="TIGR00009">
    <property type="entry name" value="L28"/>
    <property type="match status" value="1"/>
</dbReference>
<dbReference type="PANTHER" id="PTHR13528">
    <property type="entry name" value="39S RIBOSOMAL PROTEIN L28, MITOCHONDRIAL"/>
    <property type="match status" value="1"/>
</dbReference>
<dbReference type="PANTHER" id="PTHR13528:SF2">
    <property type="entry name" value="LARGE RIBOSOMAL SUBUNIT PROTEIN BL28M"/>
    <property type="match status" value="1"/>
</dbReference>
<dbReference type="Pfam" id="PF00830">
    <property type="entry name" value="Ribosomal_L28"/>
    <property type="match status" value="1"/>
</dbReference>
<dbReference type="SUPFAM" id="SSF143800">
    <property type="entry name" value="L28p-like"/>
    <property type="match status" value="1"/>
</dbReference>
<organism>
    <name type="scientific">Tolumonas auensis (strain DSM 9187 / NBRC 110442 / TA 4)</name>
    <dbReference type="NCBI Taxonomy" id="595494"/>
    <lineage>
        <taxon>Bacteria</taxon>
        <taxon>Pseudomonadati</taxon>
        <taxon>Pseudomonadota</taxon>
        <taxon>Gammaproteobacteria</taxon>
        <taxon>Aeromonadales</taxon>
        <taxon>Aeromonadaceae</taxon>
        <taxon>Tolumonas</taxon>
    </lineage>
</organism>
<protein>
    <recommendedName>
        <fullName evidence="1">Large ribosomal subunit protein bL28</fullName>
    </recommendedName>
    <alternativeName>
        <fullName evidence="3">50S ribosomal protein L28</fullName>
    </alternativeName>
</protein>
<accession>C4L813</accession>
<name>RL28_TOLAT</name>
<sequence>MSRVCQVTGKRPTVGNNRSHAKNATRRRFLPNLQSHRFWVEGEKRFVTLRLTPKGMRIIDKLGIEAVLADIRARGEKV</sequence>
<proteinExistence type="inferred from homology"/>
<keyword id="KW-1185">Reference proteome</keyword>
<keyword id="KW-0687">Ribonucleoprotein</keyword>
<keyword id="KW-0689">Ribosomal protein</keyword>
<comment type="similarity">
    <text evidence="1">Belongs to the bacterial ribosomal protein bL28 family.</text>
</comment>